<evidence type="ECO:0000250" key="1">
    <source>
        <dbReference type="UniProtKB" id="Q9P4V2"/>
    </source>
</evidence>
<evidence type="ECO:0000269" key="2">
    <source>
    </source>
</evidence>
<evidence type="ECO:0000269" key="3">
    <source>
    </source>
</evidence>
<evidence type="ECO:0000269" key="4">
    <source>
    </source>
</evidence>
<evidence type="ECO:0000269" key="5">
    <source>
    </source>
</evidence>
<evidence type="ECO:0000303" key="6">
    <source>
    </source>
</evidence>
<evidence type="ECO:0000303" key="7">
    <source>
    </source>
</evidence>
<evidence type="ECO:0000305" key="8"/>
<evidence type="ECO:0000305" key="9">
    <source>
    </source>
</evidence>
<evidence type="ECO:0000312" key="10">
    <source>
        <dbReference type="SGD" id="S000000784"/>
    </source>
</evidence>
<evidence type="ECO:0007744" key="11">
    <source>
    </source>
</evidence>
<reference key="1">
    <citation type="journal article" date="1994" name="Eur. J. Biochem.">
        <title>A family of hexosephosphate mutases in Saccharomyces cerevisiae.</title>
        <authorList>
            <person name="Boles E."/>
            <person name="Liebetrau W."/>
            <person name="Hofmann M."/>
            <person name="Zimmermann F.K."/>
        </authorList>
    </citation>
    <scope>NUCLEOTIDE SEQUENCE [GENOMIC DNA]</scope>
    <scope>FUNCTION</scope>
    <source>
        <strain>EBY21-8</strain>
    </source>
</reference>
<reference key="2">
    <citation type="journal article" date="1997" name="Nature">
        <title>The nucleotide sequence of Saccharomyces cerevisiae chromosome V.</title>
        <authorList>
            <person name="Dietrich F.S."/>
            <person name="Mulligan J.T."/>
            <person name="Hennessy K.M."/>
            <person name="Yelton M.A."/>
            <person name="Allen E."/>
            <person name="Araujo R."/>
            <person name="Aviles E."/>
            <person name="Berno A."/>
            <person name="Brennan T."/>
            <person name="Carpenter J."/>
            <person name="Chen E."/>
            <person name="Cherry J.M."/>
            <person name="Chung E."/>
            <person name="Duncan M."/>
            <person name="Guzman E."/>
            <person name="Hartzell G."/>
            <person name="Hunicke-Smith S."/>
            <person name="Hyman R.W."/>
            <person name="Kayser A."/>
            <person name="Komp C."/>
            <person name="Lashkari D."/>
            <person name="Lew H."/>
            <person name="Lin D."/>
            <person name="Mosedale D."/>
            <person name="Nakahara K."/>
            <person name="Namath A."/>
            <person name="Norgren R."/>
            <person name="Oefner P."/>
            <person name="Oh C."/>
            <person name="Petel F.X."/>
            <person name="Roberts D."/>
            <person name="Sehl P."/>
            <person name="Schramm S."/>
            <person name="Shogren T."/>
            <person name="Smith V."/>
            <person name="Taylor P."/>
            <person name="Wei Y."/>
            <person name="Botstein D."/>
            <person name="Davis R.W."/>
        </authorList>
    </citation>
    <scope>NUCLEOTIDE SEQUENCE [LARGE SCALE GENOMIC DNA]</scope>
    <source>
        <strain>ATCC 204508 / S288c</strain>
    </source>
</reference>
<reference key="3">
    <citation type="journal article" date="2014" name="G3 (Bethesda)">
        <title>The reference genome sequence of Saccharomyces cerevisiae: Then and now.</title>
        <authorList>
            <person name="Engel S.R."/>
            <person name="Dietrich F.S."/>
            <person name="Fisk D.G."/>
            <person name="Binkley G."/>
            <person name="Balakrishnan R."/>
            <person name="Costanzo M.C."/>
            <person name="Dwight S.S."/>
            <person name="Hitz B.C."/>
            <person name="Karra K."/>
            <person name="Nash R.S."/>
            <person name="Weng S."/>
            <person name="Wong E.D."/>
            <person name="Lloyd P."/>
            <person name="Skrzypek M.S."/>
            <person name="Miyasato S.R."/>
            <person name="Simison M."/>
            <person name="Cherry J.M."/>
        </authorList>
    </citation>
    <scope>GENOME REANNOTATION</scope>
    <source>
        <strain>ATCC 204508 / S288c</strain>
    </source>
</reference>
<reference key="4">
    <citation type="journal article" date="1994" name="Eur. J. Biochem.">
        <title>Characterization of the essential yeast gene encoding N-acetylglucosamine-phosphate mutase.</title>
        <authorList>
            <person name="Hofmann M."/>
            <person name="Boles E."/>
            <person name="Zimmermann F.K."/>
        </authorList>
    </citation>
    <scope>FUNCTION</scope>
    <scope>CATALYTIC ACTIVITY</scope>
    <scope>DISRUPTION PHENOTYPE</scope>
    <source>
        <strain>EBY21-8</strain>
    </source>
</reference>
<reference key="5">
    <citation type="journal article" date="2003" name="Nature">
        <title>Global analysis of protein localization in budding yeast.</title>
        <authorList>
            <person name="Huh W.-K."/>
            <person name="Falvo J.V."/>
            <person name="Gerke L.C."/>
            <person name="Carroll A.S."/>
            <person name="Howson R.W."/>
            <person name="Weissman J.S."/>
            <person name="O'Shea E.K."/>
        </authorList>
    </citation>
    <scope>SUBCELLULAR LOCATION [LARGE SCALE ANALYSIS]</scope>
</reference>
<reference key="6">
    <citation type="journal article" date="2003" name="Nature">
        <title>Global analysis of protein expression in yeast.</title>
        <authorList>
            <person name="Ghaemmaghami S."/>
            <person name="Huh W.-K."/>
            <person name="Bower K."/>
            <person name="Howson R.W."/>
            <person name="Belle A."/>
            <person name="Dephoure N."/>
            <person name="O'Shea E.K."/>
            <person name="Weissman J.S."/>
        </authorList>
    </citation>
    <scope>LEVEL OF PROTEIN EXPRESSION [LARGE SCALE ANALYSIS]</scope>
</reference>
<reference key="7">
    <citation type="journal article" date="2007" name="J. Proteome Res.">
        <title>Large-scale phosphorylation analysis of alpha-factor-arrested Saccharomyces cerevisiae.</title>
        <authorList>
            <person name="Li X."/>
            <person name="Gerber S.A."/>
            <person name="Rudner A.D."/>
            <person name="Beausoleil S.A."/>
            <person name="Haas W."/>
            <person name="Villen J."/>
            <person name="Elias J.E."/>
            <person name="Gygi S.P."/>
        </authorList>
    </citation>
    <scope>PHOSPHORYLATION [LARGE SCALE ANALYSIS] AT SER-67</scope>
    <scope>IDENTIFICATION BY MASS SPECTROMETRY [LARGE SCALE ANALYSIS]</scope>
    <source>
        <strain>ADR376</strain>
    </source>
</reference>
<reference key="8">
    <citation type="journal article" date="2008" name="Mol. Cell. Proteomics">
        <title>A multidimensional chromatography technology for in-depth phosphoproteome analysis.</title>
        <authorList>
            <person name="Albuquerque C.P."/>
            <person name="Smolka M.B."/>
            <person name="Payne S.H."/>
            <person name="Bafna V."/>
            <person name="Eng J."/>
            <person name="Zhou H."/>
        </authorList>
    </citation>
    <scope>IDENTIFICATION BY MASS SPECTROMETRY [LARGE SCALE ANALYSIS]</scope>
</reference>
<reference key="9">
    <citation type="journal article" date="2009" name="Science">
        <title>Global analysis of Cdk1 substrate phosphorylation sites provides insights into evolution.</title>
        <authorList>
            <person name="Holt L.J."/>
            <person name="Tuch B.B."/>
            <person name="Villen J."/>
            <person name="Johnson A.D."/>
            <person name="Gygi S.P."/>
            <person name="Morgan D.O."/>
        </authorList>
    </citation>
    <scope>IDENTIFICATION BY MASS SPECTROMETRY [LARGE SCALE ANALYSIS]</scope>
</reference>
<organism>
    <name type="scientific">Saccharomyces cerevisiae (strain ATCC 204508 / S288c)</name>
    <name type="common">Baker's yeast</name>
    <dbReference type="NCBI Taxonomy" id="559292"/>
    <lineage>
        <taxon>Eukaryota</taxon>
        <taxon>Fungi</taxon>
        <taxon>Dikarya</taxon>
        <taxon>Ascomycota</taxon>
        <taxon>Saccharomycotina</taxon>
        <taxon>Saccharomycetes</taxon>
        <taxon>Saccharomycetales</taxon>
        <taxon>Saccharomycetaceae</taxon>
        <taxon>Saccharomyces</taxon>
    </lineage>
</organism>
<keyword id="KW-0119">Carbohydrate metabolism</keyword>
<keyword id="KW-0961">Cell wall biogenesis/degradation</keyword>
<keyword id="KW-0963">Cytoplasm</keyword>
<keyword id="KW-0413">Isomerase</keyword>
<keyword id="KW-0460">Magnesium</keyword>
<keyword id="KW-0479">Metal-binding</keyword>
<keyword id="KW-0539">Nucleus</keyword>
<keyword id="KW-0597">Phosphoprotein</keyword>
<keyword id="KW-1185">Reference proteome</keyword>
<name>AGM1_YEAST</name>
<gene>
    <name evidence="6" type="primary">PCM1</name>
    <name evidence="7" type="synonym">AGM1</name>
    <name evidence="10" type="ordered locus">YEL058W</name>
</gene>
<comment type="function">
    <text evidence="4 5">Catalyzes the conversion of GlcNAc-6-P into GlcNAc-1-P during the synthesis of uridine diphosphate/UDP-GlcNAc, which is a biosynthetic precursor of chitin and also supplies the amino sugars for N-linked oligosaccharides of glycoproteins (PubMed:8174553). Also has phosphoglucomutase activity (PubMed:8119301).</text>
</comment>
<comment type="catalytic activity">
    <reaction evidence="5">
        <text>N-acetyl-alpha-D-glucosamine 1-phosphate = N-acetyl-D-glucosamine 6-phosphate</text>
        <dbReference type="Rhea" id="RHEA:23804"/>
        <dbReference type="ChEBI" id="CHEBI:57513"/>
        <dbReference type="ChEBI" id="CHEBI:57776"/>
        <dbReference type="EC" id="5.4.2.3"/>
    </reaction>
</comment>
<comment type="cofactor">
    <cofactor evidence="1">
        <name>Mg(2+)</name>
        <dbReference type="ChEBI" id="CHEBI:18420"/>
    </cofactor>
    <text evidence="1">Binds 1 Mg(2+) ion per subunit.</text>
</comment>
<comment type="pathway">
    <text evidence="9">Nucleotide-sugar biosynthesis; UDP-N-acetyl-alpha-D-glucosamine biosynthesis; N-acetyl-alpha-D-glucosamine 1-phosphate from alpha-D-glucosamine 6-phosphate (route I): step 2/2.</text>
</comment>
<comment type="subcellular location">
    <subcellularLocation>
        <location evidence="2">Cytoplasm</location>
    </subcellularLocation>
    <subcellularLocation>
        <location evidence="2">Nucleus</location>
    </subcellularLocation>
</comment>
<comment type="disruption phenotype">
    <text evidence="5">Results in undivided strings of cells and growth arrest after approximately 5 division cycles.</text>
</comment>
<comment type="miscellaneous">
    <text evidence="3">Present with 14700 molecules/cell in log phase SD medium.</text>
</comment>
<comment type="similarity">
    <text evidence="8">Belongs to the phosphohexose mutase family.</text>
</comment>
<protein>
    <recommendedName>
        <fullName evidence="8">Phosphoacetylglucosamine mutase</fullName>
        <shortName>PAGM</shortName>
        <ecNumber evidence="5">5.4.2.3</ecNumber>
    </recommendedName>
    <alternativeName>
        <fullName>Acetylglucosamine phosphomutase</fullName>
    </alternativeName>
    <alternativeName>
        <fullName evidence="7">N-acetylglucosamine-phosphate mutase</fullName>
    </alternativeName>
    <alternativeName>
        <fullName evidence="6">PGM-complementing protein 1</fullName>
    </alternativeName>
</protein>
<accession>P38628</accession>
<accession>D3DLJ2</accession>
<feature type="chain" id="PRO_0000148019" description="Phosphoacetylglucosamine mutase">
    <location>
        <begin position="1"/>
        <end position="557"/>
    </location>
</feature>
<feature type="active site" description="Phosphoserine intermediate" evidence="1">
    <location>
        <position position="67"/>
    </location>
</feature>
<feature type="binding site" description="via phosphate group" evidence="1">
    <location>
        <position position="67"/>
    </location>
    <ligand>
        <name>Mg(2+)</name>
        <dbReference type="ChEBI" id="CHEBI:18420"/>
    </ligand>
</feature>
<feature type="binding site" evidence="1">
    <location>
        <position position="298"/>
    </location>
    <ligand>
        <name>Mg(2+)</name>
        <dbReference type="ChEBI" id="CHEBI:18420"/>
    </ligand>
</feature>
<feature type="binding site" evidence="1">
    <location>
        <position position="300"/>
    </location>
    <ligand>
        <name>Mg(2+)</name>
        <dbReference type="ChEBI" id="CHEBI:18420"/>
    </ligand>
</feature>
<feature type="binding site" evidence="1">
    <location>
        <position position="302"/>
    </location>
    <ligand>
        <name>Mg(2+)</name>
        <dbReference type="ChEBI" id="CHEBI:18420"/>
    </ligand>
</feature>
<feature type="binding site" evidence="1">
    <location>
        <begin position="395"/>
        <end position="397"/>
    </location>
    <ligand>
        <name>substrate</name>
    </ligand>
</feature>
<feature type="binding site" evidence="1">
    <location>
        <begin position="522"/>
        <end position="526"/>
    </location>
    <ligand>
        <name>substrate</name>
    </ligand>
</feature>
<feature type="binding site" evidence="1">
    <location>
        <position position="531"/>
    </location>
    <ligand>
        <name>substrate</name>
    </ligand>
</feature>
<feature type="modified residue" description="Phosphoserine" evidence="11">
    <location>
        <position position="67"/>
    </location>
</feature>
<feature type="sequence conflict" description="In Ref. 1; CAA53452." evidence="8" ref="1">
    <original>T</original>
    <variation>M</variation>
    <location>
        <position position="15"/>
    </location>
</feature>
<feature type="sequence conflict" description="In Ref. 1; CAA53452." evidence="8" ref="1">
    <original>Q</original>
    <variation>R</variation>
    <location>
        <position position="196"/>
    </location>
</feature>
<feature type="sequence conflict" description="In Ref. 1; CAA53452." evidence="8" ref="1">
    <original>E</original>
    <variation>G</variation>
    <location>
        <position position="406"/>
    </location>
</feature>
<proteinExistence type="evidence at protein level"/>
<dbReference type="EC" id="5.4.2.3" evidence="5"/>
<dbReference type="EMBL" id="X75816">
    <property type="protein sequence ID" value="CAA53452.1"/>
    <property type="molecule type" value="Genomic_DNA"/>
</dbReference>
<dbReference type="EMBL" id="U18795">
    <property type="protein sequence ID" value="AAB65029.1"/>
    <property type="molecule type" value="Genomic_DNA"/>
</dbReference>
<dbReference type="EMBL" id="BK006939">
    <property type="protein sequence ID" value="DAA07596.1"/>
    <property type="molecule type" value="Genomic_DNA"/>
</dbReference>
<dbReference type="PIR" id="S50531">
    <property type="entry name" value="S50531"/>
</dbReference>
<dbReference type="RefSeq" id="NP_010856.1">
    <property type="nucleotide sequence ID" value="NM_001178873.1"/>
</dbReference>
<dbReference type="SMR" id="P38628"/>
<dbReference type="BioGRID" id="36671">
    <property type="interactions" value="28"/>
</dbReference>
<dbReference type="DIP" id="DIP-6760N"/>
<dbReference type="FunCoup" id="P38628">
    <property type="interactions" value="755"/>
</dbReference>
<dbReference type="IntAct" id="P38628">
    <property type="interactions" value="2"/>
</dbReference>
<dbReference type="STRING" id="4932.YEL058W"/>
<dbReference type="iPTMnet" id="P38628"/>
<dbReference type="PaxDb" id="4932-YEL058W"/>
<dbReference type="PeptideAtlas" id="P38628"/>
<dbReference type="EnsemblFungi" id="YEL058W_mRNA">
    <property type="protein sequence ID" value="YEL058W"/>
    <property type="gene ID" value="YEL058W"/>
</dbReference>
<dbReference type="GeneID" id="856652"/>
<dbReference type="KEGG" id="sce:YEL058W"/>
<dbReference type="AGR" id="SGD:S000000784"/>
<dbReference type="SGD" id="S000000784">
    <property type="gene designation" value="PCM1"/>
</dbReference>
<dbReference type="VEuPathDB" id="FungiDB:YEL058W"/>
<dbReference type="eggNOG" id="KOG2537">
    <property type="taxonomic scope" value="Eukaryota"/>
</dbReference>
<dbReference type="GeneTree" id="ENSGT00390000000509"/>
<dbReference type="HOGENOM" id="CLU_022890_1_0_1"/>
<dbReference type="InParanoid" id="P38628"/>
<dbReference type="OMA" id="WEAYATK"/>
<dbReference type="OrthoDB" id="1928at2759"/>
<dbReference type="BioCyc" id="MetaCyc:YEL058W-MONOMER"/>
<dbReference type="BioCyc" id="YEAST:YEL058W-MONOMER"/>
<dbReference type="Reactome" id="R-SCE-446210">
    <property type="pathway name" value="Synthesis of UDP-N-acetyl-glucosamine"/>
</dbReference>
<dbReference type="UniPathway" id="UPA00113">
    <property type="reaction ID" value="UER00530"/>
</dbReference>
<dbReference type="BioGRID-ORCS" id="856652">
    <property type="hits" value="10 hits in 10 CRISPR screens"/>
</dbReference>
<dbReference type="PRO" id="PR:P38628"/>
<dbReference type="Proteomes" id="UP000002311">
    <property type="component" value="Chromosome V"/>
</dbReference>
<dbReference type="RNAct" id="P38628">
    <property type="molecule type" value="protein"/>
</dbReference>
<dbReference type="GO" id="GO:0005737">
    <property type="term" value="C:cytoplasm"/>
    <property type="evidence" value="ECO:0007005"/>
    <property type="project" value="SGD"/>
</dbReference>
<dbReference type="GO" id="GO:0005634">
    <property type="term" value="C:nucleus"/>
    <property type="evidence" value="ECO:0007005"/>
    <property type="project" value="SGD"/>
</dbReference>
<dbReference type="GO" id="GO:0000287">
    <property type="term" value="F:magnesium ion binding"/>
    <property type="evidence" value="ECO:0007669"/>
    <property type="project" value="InterPro"/>
</dbReference>
<dbReference type="GO" id="GO:0004610">
    <property type="term" value="F:phosphoacetylglucosamine mutase activity"/>
    <property type="evidence" value="ECO:0000315"/>
    <property type="project" value="SGD"/>
</dbReference>
<dbReference type="GO" id="GO:0005975">
    <property type="term" value="P:carbohydrate metabolic process"/>
    <property type="evidence" value="ECO:0007669"/>
    <property type="project" value="InterPro"/>
</dbReference>
<dbReference type="GO" id="GO:0071555">
    <property type="term" value="P:cell wall organization"/>
    <property type="evidence" value="ECO:0007669"/>
    <property type="project" value="UniProtKB-KW"/>
</dbReference>
<dbReference type="GO" id="GO:0006031">
    <property type="term" value="P:chitin biosynthetic process"/>
    <property type="evidence" value="ECO:0000315"/>
    <property type="project" value="SGD"/>
</dbReference>
<dbReference type="GO" id="GO:0006048">
    <property type="term" value="P:UDP-N-acetylglucosamine biosynthetic process"/>
    <property type="evidence" value="ECO:0000318"/>
    <property type="project" value="GO_Central"/>
</dbReference>
<dbReference type="CDD" id="cd03086">
    <property type="entry name" value="PGM3"/>
    <property type="match status" value="1"/>
</dbReference>
<dbReference type="FunFam" id="3.30.310.50:FF:000003">
    <property type="entry name" value="Phosphoacetylglucosamine mutase"/>
    <property type="match status" value="1"/>
</dbReference>
<dbReference type="FunFam" id="3.40.120.10:FF:000013">
    <property type="entry name" value="Phosphoacetylglucosamine mutase"/>
    <property type="match status" value="1"/>
</dbReference>
<dbReference type="FunFam" id="3.40.120.10:FF:000039">
    <property type="entry name" value="Phosphoacetylglucosamine mutase"/>
    <property type="match status" value="1"/>
</dbReference>
<dbReference type="Gene3D" id="3.40.120.10">
    <property type="entry name" value="Alpha-D-Glucose-1,6-Bisphosphate, subunit A, domain 3"/>
    <property type="match status" value="2"/>
</dbReference>
<dbReference type="Gene3D" id="3.30.310.50">
    <property type="entry name" value="Alpha-D-phosphohexomutase, C-terminal domain"/>
    <property type="match status" value="1"/>
</dbReference>
<dbReference type="InterPro" id="IPR005844">
    <property type="entry name" value="A-D-PHexomutase_a/b/a-I"/>
</dbReference>
<dbReference type="InterPro" id="IPR016055">
    <property type="entry name" value="A-D-PHexomutase_a/b/a-I/II/III"/>
</dbReference>
<dbReference type="InterPro" id="IPR005843">
    <property type="entry name" value="A-D-PHexomutase_C"/>
</dbReference>
<dbReference type="InterPro" id="IPR036900">
    <property type="entry name" value="A-D-PHexomutase_C_sf"/>
</dbReference>
<dbReference type="InterPro" id="IPR016066">
    <property type="entry name" value="A-D-PHexomutase_CS"/>
</dbReference>
<dbReference type="InterPro" id="IPR049023">
    <property type="entry name" value="AMG1_II"/>
</dbReference>
<dbReference type="InterPro" id="IPR049022">
    <property type="entry name" value="AMG1_III"/>
</dbReference>
<dbReference type="InterPro" id="IPR016657">
    <property type="entry name" value="PAGM"/>
</dbReference>
<dbReference type="PANTHER" id="PTHR45955">
    <property type="entry name" value="PHOSPHOACETYLGLUCOSAMINE MUTASE"/>
    <property type="match status" value="1"/>
</dbReference>
<dbReference type="PANTHER" id="PTHR45955:SF1">
    <property type="entry name" value="PHOSPHOACETYLGLUCOSAMINE MUTASE"/>
    <property type="match status" value="1"/>
</dbReference>
<dbReference type="Pfam" id="PF21405">
    <property type="entry name" value="AMG1_II"/>
    <property type="match status" value="1"/>
</dbReference>
<dbReference type="Pfam" id="PF21404">
    <property type="entry name" value="AMG1_III"/>
    <property type="match status" value="1"/>
</dbReference>
<dbReference type="Pfam" id="PF02878">
    <property type="entry name" value="PGM_PMM_I"/>
    <property type="match status" value="1"/>
</dbReference>
<dbReference type="Pfam" id="PF00408">
    <property type="entry name" value="PGM_PMM_IV"/>
    <property type="match status" value="1"/>
</dbReference>
<dbReference type="PIRSF" id="PIRSF016408">
    <property type="entry name" value="PAGM"/>
    <property type="match status" value="1"/>
</dbReference>
<dbReference type="SUPFAM" id="SSF55957">
    <property type="entry name" value="Phosphoglucomutase, C-terminal domain"/>
    <property type="match status" value="1"/>
</dbReference>
<dbReference type="SUPFAM" id="SSF53738">
    <property type="entry name" value="Phosphoglucomutase, first 3 domains"/>
    <property type="match status" value="3"/>
</dbReference>
<dbReference type="PROSITE" id="PS00710">
    <property type="entry name" value="PGM_PMM"/>
    <property type="match status" value="1"/>
</dbReference>
<sequence>MKVDYEQLCKLYDDTCRTKNVQFSYGTAGFRTLAKNLDTVMFSTGILAVLRSLKLQGQYVGVMITASHNPYQDNGVKIVEPDGSMLLATWEPYAMQLANAASFATNFEEFRVELAKLIEHEKIDLNTTVVPHIVVGRDSRESSPYLLRCLTSSMASVFHAQVLDLGCVTTPQLHYITDLSNRRKLEGDTAPVATEQDYYSFFIGAFNELFATYQLEKRLSVPKLFIDTANGIGGPQLKKLLASEDWDVPAEQVEVINDRSDVPELLNFECGADYVKTNQRLPKGLSPSSFDSLYCSFDGDADRVVFYYVDSGSKFHLLDGDKISTLFAKFLSKQLELAHLEHSLKIGVVQTAYANGSSTAYIKNTLHCPVSCTKTGVKHLHHEAATQYDIGIYFEANGHGTIIFSEKFHRTIKSELSKSKLNGDTLALRTLKCFSELINQTVGDAISDMLAVLATLAILKMSPMDWDEEYTDLPNKLVKCIVPDRSIFQTTDQERKLLNPVGLQDKIDLVVAKYPMGRSFVRASGTEDAVRVYAECKDSSKLGQFCDEVVEHVKASA</sequence>